<protein>
    <recommendedName>
        <fullName>Uncharacterized protein YgcP</fullName>
    </recommendedName>
</protein>
<organism>
    <name type="scientific">Escherichia coli (strain K12)</name>
    <dbReference type="NCBI Taxonomy" id="83333"/>
    <lineage>
        <taxon>Bacteria</taxon>
        <taxon>Pseudomonadati</taxon>
        <taxon>Pseudomonadota</taxon>
        <taxon>Gammaproteobacteria</taxon>
        <taxon>Enterobacterales</taxon>
        <taxon>Enterobacteriaceae</taxon>
        <taxon>Escherichia</taxon>
    </lineage>
</organism>
<comment type="interaction">
    <interactant intactId="EBI-557727">
        <id>Q46906</id>
    </interactant>
    <interactant intactId="EBI-542092">
        <id>P0A6Y8</id>
        <label>dnaK</label>
    </interactant>
    <organismsDiffer>false</organismsDiffer>
    <experiments>3</experiments>
</comment>
<comment type="similarity">
    <text evidence="1">To B.subtilis GlpP.</text>
</comment>
<sequence length="191" mass="20786">MPLLHLLRQNPVIAAVKDNASLQLAIDSECQFISVLYGNICTISNIVKKIKNAGKYAFIHVDLLEGASNKEVVIQFLKLVTEADGIISTKASMLKAARAEGFFCIHRLFIVDSISFHNIDKQVAQSNPDCIEILPGCMPKVLGWVTEKIRQPLIAGGLVCDEEDARNAINAGVVALSTTNTGVWTLAKKLL</sequence>
<accession>Q46906</accession>
<accession>Q2MA61</accession>
<evidence type="ECO:0000305" key="1"/>
<proteinExistence type="evidence at protein level"/>
<reference key="1">
    <citation type="journal article" date="1997" name="Science">
        <title>The complete genome sequence of Escherichia coli K-12.</title>
        <authorList>
            <person name="Blattner F.R."/>
            <person name="Plunkett G. III"/>
            <person name="Bloch C.A."/>
            <person name="Perna N.T."/>
            <person name="Burland V."/>
            <person name="Riley M."/>
            <person name="Collado-Vides J."/>
            <person name="Glasner J.D."/>
            <person name="Rode C.K."/>
            <person name="Mayhew G.F."/>
            <person name="Gregor J."/>
            <person name="Davis N.W."/>
            <person name="Kirkpatrick H.A."/>
            <person name="Goeden M.A."/>
            <person name="Rose D.J."/>
            <person name="Mau B."/>
            <person name="Shao Y."/>
        </authorList>
    </citation>
    <scope>NUCLEOTIDE SEQUENCE [LARGE SCALE GENOMIC DNA]</scope>
    <source>
        <strain>K12 / MG1655 / ATCC 47076</strain>
    </source>
</reference>
<reference key="2">
    <citation type="journal article" date="2006" name="Mol. Syst. Biol.">
        <title>Highly accurate genome sequences of Escherichia coli K-12 strains MG1655 and W3110.</title>
        <authorList>
            <person name="Hayashi K."/>
            <person name="Morooka N."/>
            <person name="Yamamoto Y."/>
            <person name="Fujita K."/>
            <person name="Isono K."/>
            <person name="Choi S."/>
            <person name="Ohtsubo E."/>
            <person name="Baba T."/>
            <person name="Wanner B.L."/>
            <person name="Mori H."/>
            <person name="Horiuchi T."/>
        </authorList>
    </citation>
    <scope>NUCLEOTIDE SEQUENCE [LARGE SCALE GENOMIC DNA]</scope>
    <source>
        <strain>K12 / W3110 / ATCC 27325 / DSM 5911</strain>
    </source>
</reference>
<keyword id="KW-1185">Reference proteome</keyword>
<dbReference type="EMBL" id="U29579">
    <property type="protein sequence ID" value="AAA69278.1"/>
    <property type="molecule type" value="Genomic_DNA"/>
</dbReference>
<dbReference type="EMBL" id="U00096">
    <property type="protein sequence ID" value="AAC75810.1"/>
    <property type="molecule type" value="Genomic_DNA"/>
</dbReference>
<dbReference type="EMBL" id="AP009048">
    <property type="protein sequence ID" value="BAE76845.1"/>
    <property type="molecule type" value="Genomic_DNA"/>
</dbReference>
<dbReference type="PIR" id="D65058">
    <property type="entry name" value="D65058"/>
</dbReference>
<dbReference type="RefSeq" id="NP_417248.1">
    <property type="nucleotide sequence ID" value="NC_000913.3"/>
</dbReference>
<dbReference type="RefSeq" id="WP_001130266.1">
    <property type="nucleotide sequence ID" value="NZ_STEB01000030.1"/>
</dbReference>
<dbReference type="SMR" id="Q46906"/>
<dbReference type="BioGRID" id="4262291">
    <property type="interactions" value="20"/>
</dbReference>
<dbReference type="DIP" id="DIP-12132N"/>
<dbReference type="FunCoup" id="Q46906">
    <property type="interactions" value="118"/>
</dbReference>
<dbReference type="IntAct" id="Q46906">
    <property type="interactions" value="11"/>
</dbReference>
<dbReference type="STRING" id="511145.b2768"/>
<dbReference type="PaxDb" id="511145-b2768"/>
<dbReference type="EnsemblBacteria" id="AAC75810">
    <property type="protein sequence ID" value="AAC75810"/>
    <property type="gene ID" value="b2768"/>
</dbReference>
<dbReference type="GeneID" id="947536"/>
<dbReference type="KEGG" id="ecj:JW2738"/>
<dbReference type="KEGG" id="eco:b2768"/>
<dbReference type="KEGG" id="ecoc:C3026_15210"/>
<dbReference type="PATRIC" id="fig|1411691.4.peg.3969"/>
<dbReference type="EchoBASE" id="EB2924"/>
<dbReference type="eggNOG" id="COG1954">
    <property type="taxonomic scope" value="Bacteria"/>
</dbReference>
<dbReference type="HOGENOM" id="CLU_111516_0_2_6"/>
<dbReference type="InParanoid" id="Q46906"/>
<dbReference type="OMA" id="PAIRNMK"/>
<dbReference type="OrthoDB" id="9799580at2"/>
<dbReference type="PhylomeDB" id="Q46906"/>
<dbReference type="BioCyc" id="EcoCyc:G7434-MONOMER"/>
<dbReference type="PRO" id="PR:Q46906"/>
<dbReference type="Proteomes" id="UP000000625">
    <property type="component" value="Chromosome"/>
</dbReference>
<dbReference type="GO" id="GO:0006071">
    <property type="term" value="P:glycerol metabolic process"/>
    <property type="evidence" value="ECO:0007669"/>
    <property type="project" value="InterPro"/>
</dbReference>
<dbReference type="GO" id="GO:0006355">
    <property type="term" value="P:regulation of DNA-templated transcription"/>
    <property type="evidence" value="ECO:0007669"/>
    <property type="project" value="InterPro"/>
</dbReference>
<dbReference type="Gene3D" id="3.20.20.70">
    <property type="entry name" value="Aldolase class I"/>
    <property type="match status" value="1"/>
</dbReference>
<dbReference type="InterPro" id="IPR013785">
    <property type="entry name" value="Aldolase_TIM"/>
</dbReference>
<dbReference type="InterPro" id="IPR006699">
    <property type="entry name" value="GlpP"/>
</dbReference>
<dbReference type="PANTHER" id="PTHR35787">
    <property type="entry name" value="GLYCEROL UPTAKE OPERON ANTITERMINATOR REGULATORY PROTEIN"/>
    <property type="match status" value="1"/>
</dbReference>
<dbReference type="PANTHER" id="PTHR35787:SF1">
    <property type="entry name" value="GLYCEROL UPTAKE OPERON ANTITERMINATOR REGULATORY PROTEIN"/>
    <property type="match status" value="1"/>
</dbReference>
<dbReference type="Pfam" id="PF04309">
    <property type="entry name" value="G3P_antiterm"/>
    <property type="match status" value="1"/>
</dbReference>
<dbReference type="PIRSF" id="PIRSF016897">
    <property type="entry name" value="GlpP"/>
    <property type="match status" value="1"/>
</dbReference>
<dbReference type="SUPFAM" id="SSF110391">
    <property type="entry name" value="GlpP-like"/>
    <property type="match status" value="1"/>
</dbReference>
<gene>
    <name type="primary">ygcP</name>
    <name type="ordered locus">b2768</name>
    <name type="ordered locus">JW2738</name>
</gene>
<name>YGCP_ECOLI</name>
<feature type="chain" id="PRO_0000169325" description="Uncharacterized protein YgcP">
    <location>
        <begin position="1"/>
        <end position="191"/>
    </location>
</feature>